<comment type="function">
    <text evidence="1">Probable neurotoxin that inhibits ion channels (By similarity). Is toxic to mice.</text>
</comment>
<comment type="subcellular location">
    <subcellularLocation>
        <location>Secreted</location>
    </subcellularLocation>
</comment>
<comment type="tissue specificity">
    <text>Expressed by the venom gland.</text>
</comment>
<comment type="domain">
    <text evidence="3">Has the structural arrangement of an alpha-helix connected to antiparallel beta-sheets by disulfide bonds (CS-alpha/beta).</text>
</comment>
<comment type="similarity">
    <text evidence="3">Belongs to the long (3 C-C) scorpion toxin superfamily. Sodium/Potassium channel inhibitor family.</text>
</comment>
<keyword id="KW-1015">Disulfide bond</keyword>
<keyword id="KW-0872">Ion channel impairing toxin</keyword>
<keyword id="KW-0528">Neurotoxin</keyword>
<keyword id="KW-0964">Secreted</keyword>
<keyword id="KW-0732">Signal</keyword>
<keyword id="KW-0800">Toxin</keyword>
<protein>
    <recommendedName>
        <fullName>Toxin Acra I-3</fullName>
    </recommendedName>
</protein>
<feature type="signal peptide" evidence="1">
    <location>
        <begin position="1"/>
        <end position="22"/>
    </location>
</feature>
<feature type="chain" id="PRO_0000271321" description="Toxin Acra I-3">
    <location>
        <begin position="23"/>
        <end position="80"/>
    </location>
</feature>
<feature type="domain" description="LCN-type CS-alpha/beta" evidence="2">
    <location>
        <begin position="25"/>
        <end position="80"/>
    </location>
</feature>
<feature type="disulfide bond" evidence="2">
    <location>
        <begin position="40"/>
        <end position="63"/>
    </location>
</feature>
<feature type="disulfide bond" evidence="2">
    <location>
        <begin position="49"/>
        <end position="68"/>
    </location>
</feature>
<feature type="disulfide bond" evidence="2">
    <location>
        <begin position="53"/>
        <end position="70"/>
    </location>
</feature>
<organism>
    <name type="scientific">Androctonus crassicauda</name>
    <name type="common">Arabian fat-tailed scorpion</name>
    <dbReference type="NCBI Taxonomy" id="122909"/>
    <lineage>
        <taxon>Eukaryota</taxon>
        <taxon>Metazoa</taxon>
        <taxon>Ecdysozoa</taxon>
        <taxon>Arthropoda</taxon>
        <taxon>Chelicerata</taxon>
        <taxon>Arachnida</taxon>
        <taxon>Scorpiones</taxon>
        <taxon>Buthida</taxon>
        <taxon>Buthoidea</taxon>
        <taxon>Buthidae</taxon>
        <taxon>Androctonus</taxon>
    </lineage>
</organism>
<sequence length="80" mass="8853">MMKLVLLSVIVILFSLIGSIHGANVPGNYPLDSSGNKYPCTVLGDNQSCIDVCKKHGVKYGYCYGFKCWCEYLKDKNVSL</sequence>
<proteinExistence type="evidence at transcript level"/>
<name>TX13_ANDCR</name>
<evidence type="ECO:0000250" key="1"/>
<evidence type="ECO:0000255" key="2">
    <source>
        <dbReference type="PROSITE-ProRule" id="PRU01210"/>
    </source>
</evidence>
<evidence type="ECO:0000305" key="3"/>
<accession>P0C294</accession>
<reference key="1">
    <citation type="journal article" date="2006" name="Toxicon">
        <title>Characterization of venom components from the scorpion Androctonus crassicauda of Turkey: peptides and genes.</title>
        <authorList>
            <person name="Caliskan F."/>
            <person name="Garcia B.I."/>
            <person name="Coronas F.I.V."/>
            <person name="Batista C.V.F."/>
            <person name="Zamudio F.Z."/>
            <person name="Possani L.D."/>
        </authorList>
    </citation>
    <scope>NUCLEOTIDE SEQUENCE [MRNA]</scope>
    <source>
        <tissue>Venom gland</tissue>
    </source>
</reference>
<dbReference type="SMR" id="P0C294"/>
<dbReference type="GO" id="GO:0005576">
    <property type="term" value="C:extracellular region"/>
    <property type="evidence" value="ECO:0007669"/>
    <property type="project" value="UniProtKB-SubCell"/>
</dbReference>
<dbReference type="GO" id="GO:0019871">
    <property type="term" value="F:sodium channel inhibitor activity"/>
    <property type="evidence" value="ECO:0007669"/>
    <property type="project" value="InterPro"/>
</dbReference>
<dbReference type="GO" id="GO:0090729">
    <property type="term" value="F:toxin activity"/>
    <property type="evidence" value="ECO:0007669"/>
    <property type="project" value="UniProtKB-KW"/>
</dbReference>
<dbReference type="CDD" id="cd23106">
    <property type="entry name" value="neurotoxins_LC_scorpion"/>
    <property type="match status" value="1"/>
</dbReference>
<dbReference type="FunFam" id="3.30.30.10:FF:000008">
    <property type="entry name" value="Toxin-like peptide AaF1CA7"/>
    <property type="match status" value="1"/>
</dbReference>
<dbReference type="Gene3D" id="3.30.30.10">
    <property type="entry name" value="Knottin, scorpion toxin-like"/>
    <property type="match status" value="1"/>
</dbReference>
<dbReference type="InterPro" id="IPR044062">
    <property type="entry name" value="LCN-type_CS_alpha_beta_dom"/>
</dbReference>
<dbReference type="InterPro" id="IPR036574">
    <property type="entry name" value="Scorpion_toxin-like_sf"/>
</dbReference>
<dbReference type="InterPro" id="IPR002061">
    <property type="entry name" value="Scorpion_toxinL/defensin"/>
</dbReference>
<dbReference type="Pfam" id="PF00537">
    <property type="entry name" value="Toxin_3"/>
    <property type="match status" value="1"/>
</dbReference>
<dbReference type="SUPFAM" id="SSF57095">
    <property type="entry name" value="Scorpion toxin-like"/>
    <property type="match status" value="1"/>
</dbReference>
<dbReference type="PROSITE" id="PS51863">
    <property type="entry name" value="LCN_CSAB"/>
    <property type="match status" value="1"/>
</dbReference>